<gene>
    <name type="primary">eda</name>
    <name type="ordered locus">PA3181</name>
</gene>
<dbReference type="EC" id="4.1.2.14" evidence="3"/>
<dbReference type="EMBL" id="AF029673">
    <property type="protein sequence ID" value="AAC38312.2"/>
    <property type="molecule type" value="Genomic_DNA"/>
</dbReference>
<dbReference type="EMBL" id="AE004091">
    <property type="protein sequence ID" value="AAG06569.1"/>
    <property type="molecule type" value="Genomic_DNA"/>
</dbReference>
<dbReference type="PIR" id="G83247">
    <property type="entry name" value="G83247"/>
</dbReference>
<dbReference type="RefSeq" id="NP_251871.1">
    <property type="nucleotide sequence ID" value="NC_002516.2"/>
</dbReference>
<dbReference type="RefSeq" id="WP_003113440.1">
    <property type="nucleotide sequence ID" value="NZ_QZGE01000023.1"/>
</dbReference>
<dbReference type="SMR" id="O68283"/>
<dbReference type="STRING" id="208964.PA3181"/>
<dbReference type="PaxDb" id="208964-PA3181"/>
<dbReference type="DNASU" id="882580"/>
<dbReference type="GeneID" id="882580"/>
<dbReference type="KEGG" id="pae:PA3181"/>
<dbReference type="PATRIC" id="fig|208964.12.peg.3325"/>
<dbReference type="PseudoCAP" id="PA3181"/>
<dbReference type="HOGENOM" id="CLU_077795_1_1_6"/>
<dbReference type="InParanoid" id="O68283"/>
<dbReference type="OrthoDB" id="9805177at2"/>
<dbReference type="PhylomeDB" id="O68283"/>
<dbReference type="BioCyc" id="PAER208964:G1FZ6-3241-MONOMER"/>
<dbReference type="UniPathway" id="UPA00856">
    <property type="reaction ID" value="UER00829"/>
</dbReference>
<dbReference type="Proteomes" id="UP000002438">
    <property type="component" value="Chromosome"/>
</dbReference>
<dbReference type="GO" id="GO:0106009">
    <property type="term" value="F:(4S)-4-hydroxy-2-oxoglutarate aldolase activity"/>
    <property type="evidence" value="ECO:0000318"/>
    <property type="project" value="GO_Central"/>
</dbReference>
<dbReference type="GO" id="GO:0008675">
    <property type="term" value="F:2-dehydro-3-deoxy-phosphogluconate aldolase activity"/>
    <property type="evidence" value="ECO:0007669"/>
    <property type="project" value="UniProtKB-EC"/>
</dbReference>
<dbReference type="GO" id="GO:0016832">
    <property type="term" value="F:aldehyde-lyase activity"/>
    <property type="evidence" value="ECO:0000318"/>
    <property type="project" value="GO_Central"/>
</dbReference>
<dbReference type="GO" id="GO:0009255">
    <property type="term" value="P:Entner-Doudoroff pathway through 6-phosphogluconate"/>
    <property type="evidence" value="ECO:0000318"/>
    <property type="project" value="GO_Central"/>
</dbReference>
<dbReference type="CDD" id="cd00452">
    <property type="entry name" value="KDPG_aldolase"/>
    <property type="match status" value="1"/>
</dbReference>
<dbReference type="Gene3D" id="3.20.20.70">
    <property type="entry name" value="Aldolase class I"/>
    <property type="match status" value="1"/>
</dbReference>
<dbReference type="InterPro" id="IPR000887">
    <property type="entry name" value="Aldlse_KDPG_KHG"/>
</dbReference>
<dbReference type="InterPro" id="IPR013785">
    <property type="entry name" value="Aldolase_TIM"/>
</dbReference>
<dbReference type="InterPro" id="IPR031337">
    <property type="entry name" value="KDPG/KHG_AS_1"/>
</dbReference>
<dbReference type="InterPro" id="IPR031338">
    <property type="entry name" value="KDPG/KHG_AS_2"/>
</dbReference>
<dbReference type="NCBIfam" id="TIGR01182">
    <property type="entry name" value="eda"/>
    <property type="match status" value="1"/>
</dbReference>
<dbReference type="NCBIfam" id="NF004325">
    <property type="entry name" value="PRK05718.1"/>
    <property type="match status" value="1"/>
</dbReference>
<dbReference type="PANTHER" id="PTHR30246:SF1">
    <property type="entry name" value="2-DEHYDRO-3-DEOXY-6-PHOSPHOGALACTONATE ALDOLASE-RELATED"/>
    <property type="match status" value="1"/>
</dbReference>
<dbReference type="PANTHER" id="PTHR30246">
    <property type="entry name" value="2-KETO-3-DEOXY-6-PHOSPHOGLUCONATE ALDOLASE"/>
    <property type="match status" value="1"/>
</dbReference>
<dbReference type="Pfam" id="PF01081">
    <property type="entry name" value="Aldolase"/>
    <property type="match status" value="1"/>
</dbReference>
<dbReference type="SUPFAM" id="SSF51569">
    <property type="entry name" value="Aldolase"/>
    <property type="match status" value="1"/>
</dbReference>
<dbReference type="PROSITE" id="PS00159">
    <property type="entry name" value="ALDOLASE_KDPG_KHG_1"/>
    <property type="match status" value="1"/>
</dbReference>
<dbReference type="PROSITE" id="PS00160">
    <property type="entry name" value="ALDOLASE_KDPG_KHG_2"/>
    <property type="match status" value="1"/>
</dbReference>
<accession>O68283</accession>
<accession>Q7DCB2</accession>
<keyword id="KW-0119">Carbohydrate metabolism</keyword>
<keyword id="KW-0456">Lyase</keyword>
<keyword id="KW-1185">Reference proteome</keyword>
<keyword id="KW-0704">Schiff base</keyword>
<sequence length="220" mass="23954">MHNLEQKTARIDTLCREARILPVITIDREADILPMADALAAGGLTALEITLRTAHGLTAIRRLSEERPHLRIGAGTVLDPRTFAAAEKAGASFVVTPGCTDELLRFALDSEVPLLPGVASASEIMLAYRHGYRRFKLFPAEVSGGPAALKAFSGPFPDIRFCPTGGVSLNNLADYLAVPNVMCVGGTWMLPKAVVDRGDWAQVERLSREALERFAEHRRH</sequence>
<comment type="function">
    <text evidence="2">Involved in the degradation of glucose via the Entner-Doudoroff pathway (By similarity). Catalyzes the reversible, stereospecific retro-aldol cleavage of 2-keto-3-deoxy-6-phosphogluconate (KDPG) to pyruvate and D-glyceraldehyde-3-phosphate (By similarity).</text>
</comment>
<comment type="catalytic activity">
    <reaction evidence="2">
        <text>2-dehydro-3-deoxy-6-phospho-D-gluconate = D-glyceraldehyde 3-phosphate + pyruvate</text>
        <dbReference type="Rhea" id="RHEA:17089"/>
        <dbReference type="ChEBI" id="CHEBI:15361"/>
        <dbReference type="ChEBI" id="CHEBI:57569"/>
        <dbReference type="ChEBI" id="CHEBI:59776"/>
        <dbReference type="EC" id="4.1.2.14"/>
    </reaction>
</comment>
<comment type="pathway">
    <text evidence="2">Carbohydrate acid metabolism; 2-dehydro-3-deoxy-D-gluconate degradation; D-glyceraldehyde 3-phosphate and pyruvate from 2-dehydro-3-deoxy-D-gluconate: step 2/2.</text>
</comment>
<comment type="subunit">
    <text evidence="1">Homotrimer.</text>
</comment>
<comment type="similarity">
    <text evidence="4">Belongs to the KHG/KDPG aldolase family.</text>
</comment>
<evidence type="ECO:0000250" key="1">
    <source>
        <dbReference type="UniProtKB" id="P00885"/>
    </source>
</evidence>
<evidence type="ECO:0000250" key="2">
    <source>
        <dbReference type="UniProtKB" id="P0A955"/>
    </source>
</evidence>
<evidence type="ECO:0000250" key="3">
    <source>
        <dbReference type="UniProtKB" id="Q15X88"/>
    </source>
</evidence>
<evidence type="ECO:0000305" key="4"/>
<protein>
    <recommendedName>
        <fullName evidence="3">2-dehydro-3-deoxy-phosphogluconate aldolase</fullName>
        <ecNumber evidence="3">4.1.2.14</ecNumber>
    </recommendedName>
    <alternativeName>
        <fullName evidence="3">2-keto-3-deoxy-6-phosphogluconate aldolase</fullName>
        <shortName evidence="3">KDPG aldolase</shortName>
    </alternativeName>
</protein>
<organism>
    <name type="scientific">Pseudomonas aeruginosa (strain ATCC 15692 / DSM 22644 / CIP 104116 / JCM 14847 / LMG 12228 / 1C / PRS 101 / PAO1)</name>
    <dbReference type="NCBI Taxonomy" id="208964"/>
    <lineage>
        <taxon>Bacteria</taxon>
        <taxon>Pseudomonadati</taxon>
        <taxon>Pseudomonadota</taxon>
        <taxon>Gammaproteobacteria</taxon>
        <taxon>Pseudomonadales</taxon>
        <taxon>Pseudomonadaceae</taxon>
        <taxon>Pseudomonas</taxon>
    </lineage>
</organism>
<reference key="1">
    <citation type="submission" date="1999-04" db="EMBL/GenBank/DDBJ databases">
        <title>HexR, zwf, and eda genes.</title>
        <authorList>
            <person name="Hager P.W."/>
            <person name="Dail M.B."/>
            <person name="Phibbs P.V. Jr."/>
        </authorList>
    </citation>
    <scope>NUCLEOTIDE SEQUENCE [GENOMIC DNA]</scope>
    <source>
        <strain>ATCC 15692 / DSM 22644 / CIP 104116 / JCM 14847 / LMG 12228 / 1C / PRS 101 / PAO1</strain>
    </source>
</reference>
<reference key="2">
    <citation type="journal article" date="2000" name="Nature">
        <title>Complete genome sequence of Pseudomonas aeruginosa PAO1, an opportunistic pathogen.</title>
        <authorList>
            <person name="Stover C.K."/>
            <person name="Pham X.-Q.T."/>
            <person name="Erwin A.L."/>
            <person name="Mizoguchi S.D."/>
            <person name="Warrener P."/>
            <person name="Hickey M.J."/>
            <person name="Brinkman F.S.L."/>
            <person name="Hufnagle W.O."/>
            <person name="Kowalik D.J."/>
            <person name="Lagrou M."/>
            <person name="Garber R.L."/>
            <person name="Goltry L."/>
            <person name="Tolentino E."/>
            <person name="Westbrock-Wadman S."/>
            <person name="Yuan Y."/>
            <person name="Brody L.L."/>
            <person name="Coulter S.N."/>
            <person name="Folger K.R."/>
            <person name="Kas A."/>
            <person name="Larbig K."/>
            <person name="Lim R.M."/>
            <person name="Smith K.A."/>
            <person name="Spencer D.H."/>
            <person name="Wong G.K.-S."/>
            <person name="Wu Z."/>
            <person name="Paulsen I.T."/>
            <person name="Reizer J."/>
            <person name="Saier M.H. Jr."/>
            <person name="Hancock R.E.W."/>
            <person name="Lory S."/>
            <person name="Olson M.V."/>
        </authorList>
    </citation>
    <scope>NUCLEOTIDE SEQUENCE [LARGE SCALE GENOMIC DNA]</scope>
    <source>
        <strain>ATCC 15692 / DSM 22644 / CIP 104116 / JCM 14847 / LMG 12228 / 1C / PRS 101 / PAO1</strain>
    </source>
</reference>
<name>ALKD_PSEAE</name>
<proteinExistence type="inferred from homology"/>
<feature type="chain" id="PRO_0000287743" description="2-dehydro-3-deoxy-phosphogluconate aldolase">
    <location>
        <begin position="1"/>
        <end position="220"/>
    </location>
</feature>
<feature type="active site" description="Proton acceptor" evidence="2">
    <location>
        <position position="48"/>
    </location>
</feature>
<feature type="active site" description="Schiff-base intermediate with substrate" evidence="2">
    <location>
        <position position="136"/>
    </location>
</feature>
<feature type="binding site" evidence="2">
    <location>
        <position position="52"/>
    </location>
    <ligand>
        <name>pyruvate</name>
        <dbReference type="ChEBI" id="CHEBI:15361"/>
    </ligand>
</feature>
<feature type="binding site" evidence="2">
    <location>
        <position position="76"/>
    </location>
    <ligand>
        <name>pyruvate</name>
        <dbReference type="ChEBI" id="CHEBI:15361"/>
    </ligand>
</feature>
<feature type="binding site" description="covalent" evidence="2">
    <location>
        <position position="136"/>
    </location>
    <ligand>
        <name>pyruvate</name>
        <dbReference type="ChEBI" id="CHEBI:15361"/>
    </ligand>
</feature>
<feature type="site" description="Plays a major role in determining the stereoselectivity" evidence="2">
    <location>
        <position position="164"/>
    </location>
</feature>